<feature type="chain" id="PRO_0000251076" description="Probable chemoreceptor glutamine deamidase CheD">
    <location>
        <begin position="1"/>
        <end position="233"/>
    </location>
</feature>
<accession>Q9KKL4</accession>
<proteinExistence type="inferred from homology"/>
<sequence>MLVVAVRFSIIWDILFMSDSKLATKRKLKQEEAKGQYYRFNHPSDHRHWVKVMPGGVYATSDQEIIHTGLGSCVSACAWDIEMKVGGMNHFLLPFNNQFESQHWHPQALLSDSSRYGCYAMEVLINRLLSMGAERERLKFKLFGGAHLMGYQSLVGEKNVEFVLEYAKREKLNVVAQDLGGAQPRKLLFDPQTGQAWVKRIGFSSAHAIKQDEELYQHSIDKQIPSDDVELFQ</sequence>
<protein>
    <recommendedName>
        <fullName evidence="1">Probable chemoreceptor glutamine deamidase CheD</fullName>
        <ecNumber evidence="1">3.5.1.44</ecNumber>
    </recommendedName>
</protein>
<evidence type="ECO:0000255" key="1">
    <source>
        <dbReference type="HAMAP-Rule" id="MF_01440"/>
    </source>
</evidence>
<dbReference type="EC" id="3.5.1.44" evidence="1"/>
<dbReference type="EMBL" id="AE003853">
    <property type="protein sequence ID" value="AAF96982.1"/>
    <property type="molecule type" value="Genomic_DNA"/>
</dbReference>
<dbReference type="PIR" id="F82379">
    <property type="entry name" value="F82379"/>
</dbReference>
<dbReference type="RefSeq" id="NP_233470.1">
    <property type="nucleotide sequence ID" value="NC_002506.1"/>
</dbReference>
<dbReference type="SMR" id="Q9KKL4"/>
<dbReference type="STRING" id="243277.VC_A1090"/>
<dbReference type="DNASU" id="2612642"/>
<dbReference type="EnsemblBacteria" id="AAF96982">
    <property type="protein sequence ID" value="AAF96982"/>
    <property type="gene ID" value="VC_A1090"/>
</dbReference>
<dbReference type="KEGG" id="vch:VC_A1090"/>
<dbReference type="PATRIC" id="fig|243277.26.peg.3696"/>
<dbReference type="eggNOG" id="COG1871">
    <property type="taxonomic scope" value="Bacteria"/>
</dbReference>
<dbReference type="HOGENOM" id="CLU_087854_0_0_6"/>
<dbReference type="Proteomes" id="UP000000584">
    <property type="component" value="Chromosome 2"/>
</dbReference>
<dbReference type="GO" id="GO:0050568">
    <property type="term" value="F:protein-glutamine glutaminase activity"/>
    <property type="evidence" value="ECO:0007669"/>
    <property type="project" value="UniProtKB-UniRule"/>
</dbReference>
<dbReference type="GO" id="GO:0006935">
    <property type="term" value="P:chemotaxis"/>
    <property type="evidence" value="ECO:0007669"/>
    <property type="project" value="UniProtKB-UniRule"/>
</dbReference>
<dbReference type="CDD" id="cd16352">
    <property type="entry name" value="CheD"/>
    <property type="match status" value="1"/>
</dbReference>
<dbReference type="FunFam" id="3.30.1330.200:FF:000002">
    <property type="entry name" value="Probable chemoreceptor glutamine deamidase CheD"/>
    <property type="match status" value="1"/>
</dbReference>
<dbReference type="Gene3D" id="3.30.1330.200">
    <property type="match status" value="1"/>
</dbReference>
<dbReference type="HAMAP" id="MF_01440">
    <property type="entry name" value="CheD"/>
    <property type="match status" value="1"/>
</dbReference>
<dbReference type="InterPro" id="IPR038592">
    <property type="entry name" value="CheD-like_sf"/>
</dbReference>
<dbReference type="InterPro" id="IPR005659">
    <property type="entry name" value="Chemorcpt_Glu_NH3ase_CheD"/>
</dbReference>
<dbReference type="InterPro" id="IPR011324">
    <property type="entry name" value="Cytotoxic_necrot_fac-like_cat"/>
</dbReference>
<dbReference type="NCBIfam" id="NF010016">
    <property type="entry name" value="PRK13493.1"/>
    <property type="match status" value="1"/>
</dbReference>
<dbReference type="PANTHER" id="PTHR35147">
    <property type="entry name" value="CHEMORECEPTOR GLUTAMINE DEAMIDASE CHED-RELATED"/>
    <property type="match status" value="1"/>
</dbReference>
<dbReference type="PANTHER" id="PTHR35147:SF2">
    <property type="entry name" value="CHEMORECEPTOR GLUTAMINE DEAMIDASE CHED-RELATED"/>
    <property type="match status" value="1"/>
</dbReference>
<dbReference type="Pfam" id="PF03975">
    <property type="entry name" value="CheD"/>
    <property type="match status" value="1"/>
</dbReference>
<dbReference type="SUPFAM" id="SSF64438">
    <property type="entry name" value="CNF1/YfiH-like putative cysteine hydrolases"/>
    <property type="match status" value="1"/>
</dbReference>
<keyword id="KW-0145">Chemotaxis</keyword>
<keyword id="KW-0378">Hydrolase</keyword>
<keyword id="KW-1185">Reference proteome</keyword>
<organism>
    <name type="scientific">Vibrio cholerae serotype O1 (strain ATCC 39315 / El Tor Inaba N16961)</name>
    <dbReference type="NCBI Taxonomy" id="243277"/>
    <lineage>
        <taxon>Bacteria</taxon>
        <taxon>Pseudomonadati</taxon>
        <taxon>Pseudomonadota</taxon>
        <taxon>Gammaproteobacteria</taxon>
        <taxon>Vibrionales</taxon>
        <taxon>Vibrionaceae</taxon>
        <taxon>Vibrio</taxon>
    </lineage>
</organism>
<gene>
    <name evidence="1" type="primary">cheD</name>
    <name type="ordered locus">VC_A1090</name>
</gene>
<reference key="1">
    <citation type="journal article" date="2000" name="Nature">
        <title>DNA sequence of both chromosomes of the cholera pathogen Vibrio cholerae.</title>
        <authorList>
            <person name="Heidelberg J.F."/>
            <person name="Eisen J.A."/>
            <person name="Nelson W.C."/>
            <person name="Clayton R.A."/>
            <person name="Gwinn M.L."/>
            <person name="Dodson R.J."/>
            <person name="Haft D.H."/>
            <person name="Hickey E.K."/>
            <person name="Peterson J.D."/>
            <person name="Umayam L.A."/>
            <person name="Gill S.R."/>
            <person name="Nelson K.E."/>
            <person name="Read T.D."/>
            <person name="Tettelin H."/>
            <person name="Richardson D.L."/>
            <person name="Ermolaeva M.D."/>
            <person name="Vamathevan J.J."/>
            <person name="Bass S."/>
            <person name="Qin H."/>
            <person name="Dragoi I."/>
            <person name="Sellers P."/>
            <person name="McDonald L.A."/>
            <person name="Utterback T.R."/>
            <person name="Fleischmann R.D."/>
            <person name="Nierman W.C."/>
            <person name="White O."/>
            <person name="Salzberg S.L."/>
            <person name="Smith H.O."/>
            <person name="Colwell R.R."/>
            <person name="Mekalanos J.J."/>
            <person name="Venter J.C."/>
            <person name="Fraser C.M."/>
        </authorList>
    </citation>
    <scope>NUCLEOTIDE SEQUENCE [LARGE SCALE GENOMIC DNA]</scope>
    <source>
        <strain>ATCC 39315 / El Tor Inaba N16961</strain>
    </source>
</reference>
<comment type="function">
    <text evidence="1">Probably deamidates glutamine residues to glutamate on methyl-accepting chemotaxis receptors (MCPs), playing an important role in chemotaxis.</text>
</comment>
<comment type="catalytic activity">
    <reaction evidence="1">
        <text>L-glutaminyl-[protein] + H2O = L-glutamyl-[protein] + NH4(+)</text>
        <dbReference type="Rhea" id="RHEA:16441"/>
        <dbReference type="Rhea" id="RHEA-COMP:10207"/>
        <dbReference type="Rhea" id="RHEA-COMP:10208"/>
        <dbReference type="ChEBI" id="CHEBI:15377"/>
        <dbReference type="ChEBI" id="CHEBI:28938"/>
        <dbReference type="ChEBI" id="CHEBI:29973"/>
        <dbReference type="ChEBI" id="CHEBI:30011"/>
        <dbReference type="EC" id="3.5.1.44"/>
    </reaction>
</comment>
<comment type="similarity">
    <text evidence="1">Belongs to the CheD family.</text>
</comment>
<name>CHED_VIBCH</name>